<proteinExistence type="inferred from homology"/>
<accession>Q2FXQ9</accession>
<sequence>MHFIAISINHRTADVALREQVTFRDDALRIAHEDLYETKSILENVILSTCNRTEVYAVVDQIHTGRYYIQRFLARAFGFEVDDIKAMSEVKVGDEAVEHLLRVTSGLDSIVLGETQILGQIRDAFFLAQSTGTTGTIFNHLFKQAITFAKRAHNETDIADNAVSVSYAAVELAKKVFGKLKSKQAIIIGAGEMSELSLLNLLGSGITDITVVNRTIENAMKLAAKHQVKYDELSSLPNLLESADIVISSTSAQSYIITNEMIERIAENRKQDSLVLIDIAVPRDIEPGISAITNIFNYDVDDLKGLVDANLRERQLAAATISEQIPTEIHAHNEWISMLGVVPVIRALREKAMAIQAETMDSIDRKLPGLSERERKIISKHTKSIINQMLKDPIKQAKELSSDKKSNEKLELFQNIFDIEAECPHEQAKQQKESKVKEISARRIFSFE</sequence>
<name>HEM1_STAA8</name>
<comment type="function">
    <text evidence="1">Catalyzes the NADPH-dependent reduction of glutamyl-tRNA(Glu) to glutamate 1-semialdehyde (GSA).</text>
</comment>
<comment type="catalytic activity">
    <reaction evidence="1">
        <text>(S)-4-amino-5-oxopentanoate + tRNA(Glu) + NADP(+) = L-glutamyl-tRNA(Glu) + NADPH + H(+)</text>
        <dbReference type="Rhea" id="RHEA:12344"/>
        <dbReference type="Rhea" id="RHEA-COMP:9663"/>
        <dbReference type="Rhea" id="RHEA-COMP:9680"/>
        <dbReference type="ChEBI" id="CHEBI:15378"/>
        <dbReference type="ChEBI" id="CHEBI:57501"/>
        <dbReference type="ChEBI" id="CHEBI:57783"/>
        <dbReference type="ChEBI" id="CHEBI:58349"/>
        <dbReference type="ChEBI" id="CHEBI:78442"/>
        <dbReference type="ChEBI" id="CHEBI:78520"/>
        <dbReference type="EC" id="1.2.1.70"/>
    </reaction>
</comment>
<comment type="pathway">
    <text evidence="1">Porphyrin-containing compound metabolism; protoporphyrin-IX biosynthesis; 5-aminolevulinate from L-glutamyl-tRNA(Glu): step 1/2.</text>
</comment>
<comment type="subunit">
    <text evidence="1">Homodimer.</text>
</comment>
<comment type="domain">
    <text evidence="1">Possesses an unusual extended V-shaped dimeric structure with each monomer consisting of three distinct domains arranged along a curved 'spinal' alpha-helix. The N-terminal catalytic domain specifically recognizes the glutamate moiety of the substrate. The second domain is the NADPH-binding domain, and the third C-terminal domain is responsible for dimerization.</text>
</comment>
<comment type="miscellaneous">
    <text evidence="1">During catalysis, the active site Cys acts as a nucleophile attacking the alpha-carbonyl group of tRNA-bound glutamate with the formation of a thioester intermediate between enzyme and glutamate, and the concomitant release of tRNA(Glu). The thioester intermediate is finally reduced by direct hydride transfer from NADPH, to form the product GSA.</text>
</comment>
<comment type="similarity">
    <text evidence="1">Belongs to the glutamyl-tRNA reductase family.</text>
</comment>
<organism>
    <name type="scientific">Staphylococcus aureus (strain NCTC 8325 / PS 47)</name>
    <dbReference type="NCBI Taxonomy" id="93061"/>
    <lineage>
        <taxon>Bacteria</taxon>
        <taxon>Bacillati</taxon>
        <taxon>Bacillota</taxon>
        <taxon>Bacilli</taxon>
        <taxon>Bacillales</taxon>
        <taxon>Staphylococcaceae</taxon>
        <taxon>Staphylococcus</taxon>
    </lineage>
</organism>
<gene>
    <name evidence="1" type="primary">hemA</name>
    <name type="ordered locus">SAOUHSC_01776</name>
</gene>
<reference key="1">
    <citation type="book" date="2006" name="Gram positive pathogens, 2nd edition">
        <title>The Staphylococcus aureus NCTC 8325 genome.</title>
        <editorList>
            <person name="Fischetti V."/>
            <person name="Novick R."/>
            <person name="Ferretti J."/>
            <person name="Portnoy D."/>
            <person name="Rood J."/>
        </editorList>
        <authorList>
            <person name="Gillaspy A.F."/>
            <person name="Worrell V."/>
            <person name="Orvis J."/>
            <person name="Roe B.A."/>
            <person name="Dyer D.W."/>
            <person name="Iandolo J.J."/>
        </authorList>
    </citation>
    <scope>NUCLEOTIDE SEQUENCE [LARGE SCALE GENOMIC DNA]</scope>
    <source>
        <strain>NCTC 8325 / PS 47</strain>
    </source>
</reference>
<feature type="chain" id="PRO_1000004702" description="Glutamyl-tRNA reductase">
    <location>
        <begin position="1"/>
        <end position="448"/>
    </location>
</feature>
<feature type="active site" description="Nucleophile" evidence="1">
    <location>
        <position position="50"/>
    </location>
</feature>
<feature type="binding site" evidence="1">
    <location>
        <begin position="49"/>
        <end position="52"/>
    </location>
    <ligand>
        <name>substrate</name>
    </ligand>
</feature>
<feature type="binding site" evidence="1">
    <location>
        <position position="109"/>
    </location>
    <ligand>
        <name>substrate</name>
    </ligand>
</feature>
<feature type="binding site" evidence="1">
    <location>
        <begin position="114"/>
        <end position="116"/>
    </location>
    <ligand>
        <name>substrate</name>
    </ligand>
</feature>
<feature type="binding site" evidence="1">
    <location>
        <position position="120"/>
    </location>
    <ligand>
        <name>substrate</name>
    </ligand>
</feature>
<feature type="binding site" evidence="1">
    <location>
        <begin position="189"/>
        <end position="194"/>
    </location>
    <ligand>
        <name>NADP(+)</name>
        <dbReference type="ChEBI" id="CHEBI:58349"/>
    </ligand>
</feature>
<feature type="site" description="Important for activity" evidence="1">
    <location>
        <position position="99"/>
    </location>
</feature>
<protein>
    <recommendedName>
        <fullName evidence="1">Glutamyl-tRNA reductase</fullName>
        <shortName evidence="1">GluTR</shortName>
        <ecNumber evidence="1">1.2.1.70</ecNumber>
    </recommendedName>
</protein>
<dbReference type="EC" id="1.2.1.70" evidence="1"/>
<dbReference type="EMBL" id="CP000253">
    <property type="protein sequence ID" value="ABD30845.1"/>
    <property type="molecule type" value="Genomic_DNA"/>
</dbReference>
<dbReference type="RefSeq" id="WP_000545467.1">
    <property type="nucleotide sequence ID" value="NZ_LS483365.1"/>
</dbReference>
<dbReference type="RefSeq" id="YP_500281.1">
    <property type="nucleotide sequence ID" value="NC_007795.1"/>
</dbReference>
<dbReference type="SMR" id="Q2FXQ9"/>
<dbReference type="STRING" id="93061.SAOUHSC_01776"/>
<dbReference type="PaxDb" id="1280-SAXN108_1699"/>
<dbReference type="GeneID" id="3919694"/>
<dbReference type="KEGG" id="sao:SAOUHSC_01776"/>
<dbReference type="PATRIC" id="fig|93061.5.peg.1620"/>
<dbReference type="eggNOG" id="COG0373">
    <property type="taxonomic scope" value="Bacteria"/>
</dbReference>
<dbReference type="HOGENOM" id="CLU_035113_2_2_9"/>
<dbReference type="OrthoDB" id="110209at2"/>
<dbReference type="UniPathway" id="UPA00251">
    <property type="reaction ID" value="UER00316"/>
</dbReference>
<dbReference type="PRO" id="PR:Q2FXQ9"/>
<dbReference type="Proteomes" id="UP000008816">
    <property type="component" value="Chromosome"/>
</dbReference>
<dbReference type="GO" id="GO:0008883">
    <property type="term" value="F:glutamyl-tRNA reductase activity"/>
    <property type="evidence" value="ECO:0007669"/>
    <property type="project" value="UniProtKB-UniRule"/>
</dbReference>
<dbReference type="GO" id="GO:0050661">
    <property type="term" value="F:NADP binding"/>
    <property type="evidence" value="ECO:0007669"/>
    <property type="project" value="InterPro"/>
</dbReference>
<dbReference type="GO" id="GO:0006782">
    <property type="term" value="P:protoporphyrinogen IX biosynthetic process"/>
    <property type="evidence" value="ECO:0007669"/>
    <property type="project" value="UniProtKB-UniRule"/>
</dbReference>
<dbReference type="CDD" id="cd05213">
    <property type="entry name" value="NAD_bind_Glutamyl_tRNA_reduct"/>
    <property type="match status" value="1"/>
</dbReference>
<dbReference type="FunFam" id="3.30.460.30:FF:000001">
    <property type="entry name" value="Glutamyl-tRNA reductase"/>
    <property type="match status" value="1"/>
</dbReference>
<dbReference type="FunFam" id="3.40.50.720:FF:000031">
    <property type="entry name" value="Glutamyl-tRNA reductase"/>
    <property type="match status" value="1"/>
</dbReference>
<dbReference type="Gene3D" id="3.30.460.30">
    <property type="entry name" value="Glutamyl-tRNA reductase, N-terminal domain"/>
    <property type="match status" value="1"/>
</dbReference>
<dbReference type="Gene3D" id="3.40.50.720">
    <property type="entry name" value="NAD(P)-binding Rossmann-like Domain"/>
    <property type="match status" value="1"/>
</dbReference>
<dbReference type="HAMAP" id="MF_00087">
    <property type="entry name" value="Glu_tRNA_reductase"/>
    <property type="match status" value="1"/>
</dbReference>
<dbReference type="InterPro" id="IPR000343">
    <property type="entry name" value="4pyrrol_synth_GluRdtase"/>
</dbReference>
<dbReference type="InterPro" id="IPR015896">
    <property type="entry name" value="4pyrrol_synth_GluRdtase_dimer"/>
</dbReference>
<dbReference type="InterPro" id="IPR015895">
    <property type="entry name" value="4pyrrol_synth_GluRdtase_N"/>
</dbReference>
<dbReference type="InterPro" id="IPR018214">
    <property type="entry name" value="GluRdtase_CS"/>
</dbReference>
<dbReference type="InterPro" id="IPR036453">
    <property type="entry name" value="GluRdtase_dimer_dom_sf"/>
</dbReference>
<dbReference type="InterPro" id="IPR036343">
    <property type="entry name" value="GluRdtase_N_sf"/>
</dbReference>
<dbReference type="InterPro" id="IPR036291">
    <property type="entry name" value="NAD(P)-bd_dom_sf"/>
</dbReference>
<dbReference type="InterPro" id="IPR006151">
    <property type="entry name" value="Shikm_DH/Glu-tRNA_Rdtase"/>
</dbReference>
<dbReference type="NCBIfam" id="TIGR01035">
    <property type="entry name" value="hemA"/>
    <property type="match status" value="1"/>
</dbReference>
<dbReference type="PANTHER" id="PTHR43120">
    <property type="entry name" value="GLUTAMYL-TRNA REDUCTASE 1, CHLOROPLASTIC"/>
    <property type="match status" value="1"/>
</dbReference>
<dbReference type="PANTHER" id="PTHR43120:SF1">
    <property type="entry name" value="GLUTAMYL-TRNA REDUCTASE 1, CHLOROPLASTIC"/>
    <property type="match status" value="1"/>
</dbReference>
<dbReference type="Pfam" id="PF00745">
    <property type="entry name" value="GlutR_dimer"/>
    <property type="match status" value="1"/>
</dbReference>
<dbReference type="Pfam" id="PF05201">
    <property type="entry name" value="GlutR_N"/>
    <property type="match status" value="1"/>
</dbReference>
<dbReference type="Pfam" id="PF01488">
    <property type="entry name" value="Shikimate_DH"/>
    <property type="match status" value="1"/>
</dbReference>
<dbReference type="PIRSF" id="PIRSF000445">
    <property type="entry name" value="4pyrrol_synth_GluRdtase"/>
    <property type="match status" value="1"/>
</dbReference>
<dbReference type="SUPFAM" id="SSF69742">
    <property type="entry name" value="Glutamyl tRNA-reductase catalytic, N-terminal domain"/>
    <property type="match status" value="1"/>
</dbReference>
<dbReference type="SUPFAM" id="SSF69075">
    <property type="entry name" value="Glutamyl tRNA-reductase dimerization domain"/>
    <property type="match status" value="1"/>
</dbReference>
<dbReference type="SUPFAM" id="SSF51735">
    <property type="entry name" value="NAD(P)-binding Rossmann-fold domains"/>
    <property type="match status" value="1"/>
</dbReference>
<dbReference type="PROSITE" id="PS00747">
    <property type="entry name" value="GLUTR"/>
    <property type="match status" value="1"/>
</dbReference>
<keyword id="KW-0521">NADP</keyword>
<keyword id="KW-0560">Oxidoreductase</keyword>
<keyword id="KW-0627">Porphyrin biosynthesis</keyword>
<keyword id="KW-1185">Reference proteome</keyword>
<evidence type="ECO:0000255" key="1">
    <source>
        <dbReference type="HAMAP-Rule" id="MF_00087"/>
    </source>
</evidence>